<comment type="function">
    <text evidence="1">Stabilizes TBP binding to an archaeal box-A promoter. Also responsible for recruiting RNA polymerase II to the pre-initiation complex (DNA-TBP-TFIIB).</text>
</comment>
<comment type="similarity">
    <text evidence="1">Belongs to the TFIIB family.</text>
</comment>
<name>TF2B_METTP</name>
<gene>
    <name evidence="1" type="primary">tfb</name>
    <name type="ordered locus">Mthe_0265</name>
</gene>
<proteinExistence type="inferred from homology"/>
<evidence type="ECO:0000255" key="1">
    <source>
        <dbReference type="HAMAP-Rule" id="MF_00383"/>
    </source>
</evidence>
<evidence type="ECO:0000255" key="2">
    <source>
        <dbReference type="PROSITE-ProRule" id="PRU00469"/>
    </source>
</evidence>
<reference key="1">
    <citation type="submission" date="2006-10" db="EMBL/GenBank/DDBJ databases">
        <title>Complete sequence of Methanosaeta thermophila PT.</title>
        <authorList>
            <consortium name="US DOE Joint Genome Institute"/>
            <person name="Copeland A."/>
            <person name="Lucas S."/>
            <person name="Lapidus A."/>
            <person name="Barry K."/>
            <person name="Detter J.C."/>
            <person name="Glavina del Rio T."/>
            <person name="Hammon N."/>
            <person name="Israni S."/>
            <person name="Pitluck S."/>
            <person name="Chain P."/>
            <person name="Malfatti S."/>
            <person name="Shin M."/>
            <person name="Vergez L."/>
            <person name="Schmutz J."/>
            <person name="Larimer F."/>
            <person name="Land M."/>
            <person name="Hauser L."/>
            <person name="Kyrpides N."/>
            <person name="Kim E."/>
            <person name="Smith K.S."/>
            <person name="Ingram-Smith C."/>
            <person name="Richardson P."/>
        </authorList>
    </citation>
    <scope>NUCLEOTIDE SEQUENCE [LARGE SCALE GENOMIC DNA]</scope>
    <source>
        <strain>DSM 6194 / JCM 14653 / NBRC 101360 / PT</strain>
    </source>
</reference>
<keyword id="KW-0479">Metal-binding</keyword>
<keyword id="KW-1185">Reference proteome</keyword>
<keyword id="KW-0677">Repeat</keyword>
<keyword id="KW-0804">Transcription</keyword>
<keyword id="KW-0805">Transcription regulation</keyword>
<keyword id="KW-0862">Zinc</keyword>
<keyword id="KW-0863">Zinc-finger</keyword>
<organism>
    <name type="scientific">Methanothrix thermoacetophila (strain DSM 6194 / JCM 14653 / NBRC 101360 / PT)</name>
    <name type="common">Methanosaeta thermophila</name>
    <dbReference type="NCBI Taxonomy" id="349307"/>
    <lineage>
        <taxon>Archaea</taxon>
        <taxon>Methanobacteriati</taxon>
        <taxon>Methanobacteriota</taxon>
        <taxon>Stenosarchaea group</taxon>
        <taxon>Methanomicrobia</taxon>
        <taxon>Methanotrichales</taxon>
        <taxon>Methanotrichaceae</taxon>
        <taxon>Methanothrix</taxon>
    </lineage>
</organism>
<accession>A0B5T8</accession>
<dbReference type="EMBL" id="CP000477">
    <property type="protein sequence ID" value="ABK14062.1"/>
    <property type="molecule type" value="Genomic_DNA"/>
</dbReference>
<dbReference type="RefSeq" id="WP_011695461.1">
    <property type="nucleotide sequence ID" value="NC_008553.1"/>
</dbReference>
<dbReference type="SMR" id="A0B5T8"/>
<dbReference type="STRING" id="349307.Mthe_0265"/>
<dbReference type="GeneID" id="4462795"/>
<dbReference type="KEGG" id="mtp:Mthe_0265"/>
<dbReference type="HOGENOM" id="CLU_043736_0_1_2"/>
<dbReference type="OrthoDB" id="7429at2157"/>
<dbReference type="Proteomes" id="UP000000674">
    <property type="component" value="Chromosome"/>
</dbReference>
<dbReference type="GO" id="GO:0097550">
    <property type="term" value="C:transcription preinitiation complex"/>
    <property type="evidence" value="ECO:0007669"/>
    <property type="project" value="TreeGrafter"/>
</dbReference>
<dbReference type="GO" id="GO:0003700">
    <property type="term" value="F:DNA-binding transcription factor activity"/>
    <property type="evidence" value="ECO:0007669"/>
    <property type="project" value="UniProtKB-UniRule"/>
</dbReference>
<dbReference type="GO" id="GO:0017025">
    <property type="term" value="F:TBP-class protein binding"/>
    <property type="evidence" value="ECO:0007669"/>
    <property type="project" value="InterPro"/>
</dbReference>
<dbReference type="GO" id="GO:0008270">
    <property type="term" value="F:zinc ion binding"/>
    <property type="evidence" value="ECO:0007669"/>
    <property type="project" value="UniProtKB-UniRule"/>
</dbReference>
<dbReference type="GO" id="GO:0070897">
    <property type="term" value="P:transcription preinitiation complex assembly"/>
    <property type="evidence" value="ECO:0007669"/>
    <property type="project" value="InterPro"/>
</dbReference>
<dbReference type="CDD" id="cd20549">
    <property type="entry name" value="CYCLIN_TFIIB_archaea_like_rpt1"/>
    <property type="match status" value="1"/>
</dbReference>
<dbReference type="CDD" id="cd20550">
    <property type="entry name" value="CYCLIN_TFIIB_archaea_like_rpt2"/>
    <property type="match status" value="1"/>
</dbReference>
<dbReference type="FunFam" id="1.10.472.10:FF:000023">
    <property type="entry name" value="Transcription initiation factor IIB"/>
    <property type="match status" value="1"/>
</dbReference>
<dbReference type="FunFam" id="1.10.472.170:FF:000001">
    <property type="entry name" value="Transcription initiation factor IIB"/>
    <property type="match status" value="1"/>
</dbReference>
<dbReference type="Gene3D" id="1.10.472.170">
    <property type="match status" value="1"/>
</dbReference>
<dbReference type="Gene3D" id="1.10.472.10">
    <property type="entry name" value="Cyclin-like"/>
    <property type="match status" value="1"/>
</dbReference>
<dbReference type="HAMAP" id="MF_00383">
    <property type="entry name" value="TF2B_arch"/>
    <property type="match status" value="1"/>
</dbReference>
<dbReference type="InterPro" id="IPR013763">
    <property type="entry name" value="Cyclin-like_dom"/>
</dbReference>
<dbReference type="InterPro" id="IPR036915">
    <property type="entry name" value="Cyclin-like_sf"/>
</dbReference>
<dbReference type="InterPro" id="IPR000812">
    <property type="entry name" value="TFIIB"/>
</dbReference>
<dbReference type="InterPro" id="IPR023484">
    <property type="entry name" value="TFIIB_arc"/>
</dbReference>
<dbReference type="InterPro" id="IPR023486">
    <property type="entry name" value="TFIIB_CS"/>
</dbReference>
<dbReference type="InterPro" id="IPR013150">
    <property type="entry name" value="TFIIB_cyclin"/>
</dbReference>
<dbReference type="InterPro" id="IPR013137">
    <property type="entry name" value="Znf_TFIIB"/>
</dbReference>
<dbReference type="NCBIfam" id="NF001658">
    <property type="entry name" value="PRK00423.1"/>
    <property type="match status" value="1"/>
</dbReference>
<dbReference type="PANTHER" id="PTHR11618:SF13">
    <property type="entry name" value="TRANSCRIPTION INITIATION FACTOR IIB"/>
    <property type="match status" value="1"/>
</dbReference>
<dbReference type="PANTHER" id="PTHR11618">
    <property type="entry name" value="TRANSCRIPTION INITIATION FACTOR IIB-RELATED"/>
    <property type="match status" value="1"/>
</dbReference>
<dbReference type="Pfam" id="PF00382">
    <property type="entry name" value="TFIIB"/>
    <property type="match status" value="2"/>
</dbReference>
<dbReference type="Pfam" id="PF08271">
    <property type="entry name" value="Zn_Ribbon_TF"/>
    <property type="match status" value="1"/>
</dbReference>
<dbReference type="PRINTS" id="PR00685">
    <property type="entry name" value="TIFACTORIIB"/>
</dbReference>
<dbReference type="SMART" id="SM00385">
    <property type="entry name" value="CYCLIN"/>
    <property type="match status" value="2"/>
</dbReference>
<dbReference type="SUPFAM" id="SSF47954">
    <property type="entry name" value="Cyclin-like"/>
    <property type="match status" value="2"/>
</dbReference>
<dbReference type="SUPFAM" id="SSF57783">
    <property type="entry name" value="Zinc beta-ribbon"/>
    <property type="match status" value="1"/>
</dbReference>
<dbReference type="PROSITE" id="PS00782">
    <property type="entry name" value="TFIIB"/>
    <property type="match status" value="2"/>
</dbReference>
<dbReference type="PROSITE" id="PS51134">
    <property type="entry name" value="ZF_TFIIB"/>
    <property type="match status" value="1"/>
</dbReference>
<sequence length="337" mass="38703">MEEIERIREIERTEQEKIKERIKLQREKEKEEELDKYTVECPECGSRALVRDYERAELVCSECGLVIDENFIDQGPEWRAFDHDQRMKRSRVGAPMTYTIHDKGLSTMIDWRNRDSYGKTISSKNRAQLYRLRKWQRRIRVSNATERNLAFALSELDRMASALGLSRNVRETAAVIYRRAVEKNLIRGRSIEGVAAAALYAACRQCNVPRTLDEIAEVSRVSRKEIGRTYRFVSRELSLKLMPTSPIDYIPRFCSGLNLKGDVQAKGIEILRQAAEKELTSGRGPTGVAAAAIYIASILCNDRRTQREVADVAGVTEVTIRNRYKELAEELNIEIIL</sequence>
<feature type="chain" id="PRO_1000080114" description="Transcription initiation factor IIB">
    <location>
        <begin position="1"/>
        <end position="337"/>
    </location>
</feature>
<feature type="repeat" description="1">
    <location>
        <begin position="154"/>
        <end position="237"/>
    </location>
</feature>
<feature type="repeat" description="2">
    <location>
        <begin position="248"/>
        <end position="329"/>
    </location>
</feature>
<feature type="zinc finger region" description="TFIIB-type" evidence="2">
    <location>
        <begin position="37"/>
        <end position="68"/>
    </location>
</feature>
<feature type="binding site" evidence="2">
    <location>
        <position position="41"/>
    </location>
    <ligand>
        <name>Zn(2+)</name>
        <dbReference type="ChEBI" id="CHEBI:29105"/>
    </ligand>
</feature>
<feature type="binding site" evidence="2">
    <location>
        <position position="44"/>
    </location>
    <ligand>
        <name>Zn(2+)</name>
        <dbReference type="ChEBI" id="CHEBI:29105"/>
    </ligand>
</feature>
<feature type="binding site" evidence="2">
    <location>
        <position position="60"/>
    </location>
    <ligand>
        <name>Zn(2+)</name>
        <dbReference type="ChEBI" id="CHEBI:29105"/>
    </ligand>
</feature>
<feature type="binding site" evidence="2">
    <location>
        <position position="63"/>
    </location>
    <ligand>
        <name>Zn(2+)</name>
        <dbReference type="ChEBI" id="CHEBI:29105"/>
    </ligand>
</feature>
<protein>
    <recommendedName>
        <fullName evidence="1">Transcription initiation factor IIB</fullName>
        <shortName evidence="1">TFIIB</shortName>
    </recommendedName>
</protein>